<accession>A0LE34</accession>
<evidence type="ECO:0000255" key="1">
    <source>
        <dbReference type="HAMAP-Rule" id="MF_00005"/>
    </source>
</evidence>
<feature type="chain" id="PRO_1000057040" description="Argininosuccinate synthase">
    <location>
        <begin position="1"/>
        <end position="407"/>
    </location>
</feature>
<feature type="binding site" evidence="1">
    <location>
        <begin position="11"/>
        <end position="19"/>
    </location>
    <ligand>
        <name>ATP</name>
        <dbReference type="ChEBI" id="CHEBI:30616"/>
    </ligand>
</feature>
<feature type="binding site" evidence="1">
    <location>
        <position position="38"/>
    </location>
    <ligand>
        <name>ATP</name>
        <dbReference type="ChEBI" id="CHEBI:30616"/>
    </ligand>
</feature>
<feature type="binding site" evidence="1">
    <location>
        <position position="89"/>
    </location>
    <ligand>
        <name>L-citrulline</name>
        <dbReference type="ChEBI" id="CHEBI:57743"/>
    </ligand>
</feature>
<feature type="binding site" evidence="1">
    <location>
        <position position="94"/>
    </location>
    <ligand>
        <name>L-citrulline</name>
        <dbReference type="ChEBI" id="CHEBI:57743"/>
    </ligand>
</feature>
<feature type="binding site" evidence="1">
    <location>
        <position position="119"/>
    </location>
    <ligand>
        <name>ATP</name>
        <dbReference type="ChEBI" id="CHEBI:30616"/>
    </ligand>
</feature>
<feature type="binding site" evidence="1">
    <location>
        <position position="121"/>
    </location>
    <ligand>
        <name>L-aspartate</name>
        <dbReference type="ChEBI" id="CHEBI:29991"/>
    </ligand>
</feature>
<feature type="binding site" evidence="1">
    <location>
        <position position="125"/>
    </location>
    <ligand>
        <name>L-aspartate</name>
        <dbReference type="ChEBI" id="CHEBI:29991"/>
    </ligand>
</feature>
<feature type="binding site" evidence="1">
    <location>
        <position position="125"/>
    </location>
    <ligand>
        <name>L-citrulline</name>
        <dbReference type="ChEBI" id="CHEBI:57743"/>
    </ligand>
</feature>
<feature type="binding site" evidence="1">
    <location>
        <position position="126"/>
    </location>
    <ligand>
        <name>L-aspartate</name>
        <dbReference type="ChEBI" id="CHEBI:29991"/>
    </ligand>
</feature>
<feature type="binding site" evidence="1">
    <location>
        <position position="129"/>
    </location>
    <ligand>
        <name>L-citrulline</name>
        <dbReference type="ChEBI" id="CHEBI:57743"/>
    </ligand>
</feature>
<feature type="binding site" evidence="1">
    <location>
        <position position="180"/>
    </location>
    <ligand>
        <name>L-citrulline</name>
        <dbReference type="ChEBI" id="CHEBI:57743"/>
    </ligand>
</feature>
<feature type="binding site" evidence="1">
    <location>
        <position position="189"/>
    </location>
    <ligand>
        <name>L-citrulline</name>
        <dbReference type="ChEBI" id="CHEBI:57743"/>
    </ligand>
</feature>
<feature type="binding site" evidence="1">
    <location>
        <position position="265"/>
    </location>
    <ligand>
        <name>L-citrulline</name>
        <dbReference type="ChEBI" id="CHEBI:57743"/>
    </ligand>
</feature>
<feature type="binding site" evidence="1">
    <location>
        <position position="277"/>
    </location>
    <ligand>
        <name>L-citrulline</name>
        <dbReference type="ChEBI" id="CHEBI:57743"/>
    </ligand>
</feature>
<comment type="catalytic activity">
    <reaction evidence="1">
        <text>L-citrulline + L-aspartate + ATP = 2-(N(omega)-L-arginino)succinate + AMP + diphosphate + H(+)</text>
        <dbReference type="Rhea" id="RHEA:10932"/>
        <dbReference type="ChEBI" id="CHEBI:15378"/>
        <dbReference type="ChEBI" id="CHEBI:29991"/>
        <dbReference type="ChEBI" id="CHEBI:30616"/>
        <dbReference type="ChEBI" id="CHEBI:33019"/>
        <dbReference type="ChEBI" id="CHEBI:57472"/>
        <dbReference type="ChEBI" id="CHEBI:57743"/>
        <dbReference type="ChEBI" id="CHEBI:456215"/>
        <dbReference type="EC" id="6.3.4.5"/>
    </reaction>
</comment>
<comment type="pathway">
    <text evidence="1">Amino-acid biosynthesis; L-arginine biosynthesis; L-arginine from L-ornithine and carbamoyl phosphate: step 2/3.</text>
</comment>
<comment type="subunit">
    <text evidence="1">Homotetramer.</text>
</comment>
<comment type="subcellular location">
    <subcellularLocation>
        <location evidence="1">Cytoplasm</location>
    </subcellularLocation>
</comment>
<comment type="similarity">
    <text evidence="1">Belongs to the argininosuccinate synthase family. Type 1 subfamily.</text>
</comment>
<reference key="1">
    <citation type="journal article" date="2009" name="Appl. Environ. Microbiol.">
        <title>Complete genome sequence of the chemolithoautotrophic marine magnetotactic coccus strain MC-1.</title>
        <authorList>
            <person name="Schubbe S."/>
            <person name="Williams T.J."/>
            <person name="Xie G."/>
            <person name="Kiss H.E."/>
            <person name="Brettin T.S."/>
            <person name="Martinez D."/>
            <person name="Ross C.A."/>
            <person name="Schuler D."/>
            <person name="Cox B.L."/>
            <person name="Nealson K.H."/>
            <person name="Bazylinski D.A."/>
        </authorList>
    </citation>
    <scope>NUCLEOTIDE SEQUENCE [LARGE SCALE GENOMIC DNA]</scope>
    <source>
        <strain>ATCC BAA-1437 / JCM 17883 / MC-1</strain>
    </source>
</reference>
<sequence length="407" mass="45648">MSNGIDKVVLAYSGGLDTSIILKWLQDEYQCEVVAFCADLGQAEELEPARAKAEKFGVKEIYIDDLKEEFVRDFVFPMYRANTLYEGVYHLGTSIARPLIAKRQIEIANATGAQAVSHGATGKGNDQVRFELGYYALRPDIRVIAPWREWDLTSRDKLFAYAEKHGIPVPTDKRGEVPYSMDRNLLHISFEGKALEDPWVEPDEEMFVLSVSPEKAPDQATYVELTFRQGDLVAIDDQEMSPATLLAKLNQLGGRNGIGRLDLVENRYVGMKSRGVYETPGGTILGVAHRAMESLTLDREVAHMKDELMPRYAKLIYNGYWFSPERAMLQTMIDASQTFVNGKVRVKLYKGNVVVVGRQSENSLFDPAIATFEDDKGAYNQADADGFIKLNALRMRIAAMLRNGPKV</sequence>
<proteinExistence type="inferred from homology"/>
<dbReference type="EC" id="6.3.4.5" evidence="1"/>
<dbReference type="EMBL" id="CP000471">
    <property type="protein sequence ID" value="ABK46227.1"/>
    <property type="molecule type" value="Genomic_DNA"/>
</dbReference>
<dbReference type="RefSeq" id="WP_011715279.1">
    <property type="nucleotide sequence ID" value="NC_008576.1"/>
</dbReference>
<dbReference type="SMR" id="A0LE34"/>
<dbReference type="STRING" id="156889.Mmc1_3742"/>
<dbReference type="KEGG" id="mgm:Mmc1_3742"/>
<dbReference type="eggNOG" id="COG0137">
    <property type="taxonomic scope" value="Bacteria"/>
</dbReference>
<dbReference type="HOGENOM" id="CLU_032784_4_2_5"/>
<dbReference type="OrthoDB" id="9801641at2"/>
<dbReference type="UniPathway" id="UPA00068">
    <property type="reaction ID" value="UER00113"/>
</dbReference>
<dbReference type="Proteomes" id="UP000002586">
    <property type="component" value="Chromosome"/>
</dbReference>
<dbReference type="GO" id="GO:0005737">
    <property type="term" value="C:cytoplasm"/>
    <property type="evidence" value="ECO:0007669"/>
    <property type="project" value="UniProtKB-SubCell"/>
</dbReference>
<dbReference type="GO" id="GO:0004055">
    <property type="term" value="F:argininosuccinate synthase activity"/>
    <property type="evidence" value="ECO:0007669"/>
    <property type="project" value="UniProtKB-UniRule"/>
</dbReference>
<dbReference type="GO" id="GO:0005524">
    <property type="term" value="F:ATP binding"/>
    <property type="evidence" value="ECO:0007669"/>
    <property type="project" value="UniProtKB-UniRule"/>
</dbReference>
<dbReference type="GO" id="GO:0000053">
    <property type="term" value="P:argininosuccinate metabolic process"/>
    <property type="evidence" value="ECO:0007669"/>
    <property type="project" value="TreeGrafter"/>
</dbReference>
<dbReference type="GO" id="GO:0006526">
    <property type="term" value="P:L-arginine biosynthetic process"/>
    <property type="evidence" value="ECO:0007669"/>
    <property type="project" value="UniProtKB-UniRule"/>
</dbReference>
<dbReference type="GO" id="GO:0000050">
    <property type="term" value="P:urea cycle"/>
    <property type="evidence" value="ECO:0007669"/>
    <property type="project" value="TreeGrafter"/>
</dbReference>
<dbReference type="CDD" id="cd01999">
    <property type="entry name" value="ASS"/>
    <property type="match status" value="1"/>
</dbReference>
<dbReference type="FunFam" id="1.20.5.470:FF:000001">
    <property type="entry name" value="Argininosuccinate synthase"/>
    <property type="match status" value="1"/>
</dbReference>
<dbReference type="FunFam" id="3.40.50.620:FF:000019">
    <property type="entry name" value="Argininosuccinate synthase"/>
    <property type="match status" value="1"/>
</dbReference>
<dbReference type="FunFam" id="3.90.1260.10:FF:000007">
    <property type="entry name" value="Argininosuccinate synthase"/>
    <property type="match status" value="1"/>
</dbReference>
<dbReference type="Gene3D" id="3.90.1260.10">
    <property type="entry name" value="Argininosuccinate synthetase, chain A, domain 2"/>
    <property type="match status" value="1"/>
</dbReference>
<dbReference type="Gene3D" id="3.40.50.620">
    <property type="entry name" value="HUPs"/>
    <property type="match status" value="1"/>
</dbReference>
<dbReference type="Gene3D" id="1.20.5.470">
    <property type="entry name" value="Single helix bin"/>
    <property type="match status" value="1"/>
</dbReference>
<dbReference type="HAMAP" id="MF_00005">
    <property type="entry name" value="Arg_succ_synth_type1"/>
    <property type="match status" value="1"/>
</dbReference>
<dbReference type="InterPro" id="IPR048268">
    <property type="entry name" value="Arginosuc_syn_C"/>
</dbReference>
<dbReference type="InterPro" id="IPR048267">
    <property type="entry name" value="Arginosuc_syn_N"/>
</dbReference>
<dbReference type="InterPro" id="IPR001518">
    <property type="entry name" value="Arginosuc_synth"/>
</dbReference>
<dbReference type="InterPro" id="IPR018223">
    <property type="entry name" value="Arginosuc_synth_CS"/>
</dbReference>
<dbReference type="InterPro" id="IPR023434">
    <property type="entry name" value="Arginosuc_synth_type_1_subfam"/>
</dbReference>
<dbReference type="InterPro" id="IPR024074">
    <property type="entry name" value="AS_cat/multimer_dom_body"/>
</dbReference>
<dbReference type="InterPro" id="IPR014729">
    <property type="entry name" value="Rossmann-like_a/b/a_fold"/>
</dbReference>
<dbReference type="NCBIfam" id="TIGR00032">
    <property type="entry name" value="argG"/>
    <property type="match status" value="1"/>
</dbReference>
<dbReference type="NCBIfam" id="NF001770">
    <property type="entry name" value="PRK00509.1"/>
    <property type="match status" value="1"/>
</dbReference>
<dbReference type="PANTHER" id="PTHR11587">
    <property type="entry name" value="ARGININOSUCCINATE SYNTHASE"/>
    <property type="match status" value="1"/>
</dbReference>
<dbReference type="PANTHER" id="PTHR11587:SF2">
    <property type="entry name" value="ARGININOSUCCINATE SYNTHASE"/>
    <property type="match status" value="1"/>
</dbReference>
<dbReference type="Pfam" id="PF20979">
    <property type="entry name" value="Arginosuc_syn_C"/>
    <property type="match status" value="1"/>
</dbReference>
<dbReference type="Pfam" id="PF00764">
    <property type="entry name" value="Arginosuc_synth"/>
    <property type="match status" value="1"/>
</dbReference>
<dbReference type="SUPFAM" id="SSF52402">
    <property type="entry name" value="Adenine nucleotide alpha hydrolases-like"/>
    <property type="match status" value="1"/>
</dbReference>
<dbReference type="SUPFAM" id="SSF69864">
    <property type="entry name" value="Argininosuccinate synthetase, C-terminal domain"/>
    <property type="match status" value="1"/>
</dbReference>
<dbReference type="PROSITE" id="PS00564">
    <property type="entry name" value="ARGININOSUCCIN_SYN_1"/>
    <property type="match status" value="1"/>
</dbReference>
<dbReference type="PROSITE" id="PS00565">
    <property type="entry name" value="ARGININOSUCCIN_SYN_2"/>
    <property type="match status" value="1"/>
</dbReference>
<name>ASSY_MAGMM</name>
<gene>
    <name evidence="1" type="primary">argG</name>
    <name type="ordered locus">Mmc1_3742</name>
</gene>
<protein>
    <recommendedName>
        <fullName evidence="1">Argininosuccinate synthase</fullName>
        <ecNumber evidence="1">6.3.4.5</ecNumber>
    </recommendedName>
    <alternativeName>
        <fullName evidence="1">Citrulline--aspartate ligase</fullName>
    </alternativeName>
</protein>
<organism>
    <name type="scientific">Magnetococcus marinus (strain ATCC BAA-1437 / JCM 17883 / MC-1)</name>
    <dbReference type="NCBI Taxonomy" id="156889"/>
    <lineage>
        <taxon>Bacteria</taxon>
        <taxon>Pseudomonadati</taxon>
        <taxon>Pseudomonadota</taxon>
        <taxon>Alphaproteobacteria</taxon>
        <taxon>Magnetococcales</taxon>
        <taxon>Magnetococcaceae</taxon>
        <taxon>Magnetococcus</taxon>
    </lineage>
</organism>
<keyword id="KW-0028">Amino-acid biosynthesis</keyword>
<keyword id="KW-0055">Arginine biosynthesis</keyword>
<keyword id="KW-0067">ATP-binding</keyword>
<keyword id="KW-0963">Cytoplasm</keyword>
<keyword id="KW-0436">Ligase</keyword>
<keyword id="KW-0547">Nucleotide-binding</keyword>
<keyword id="KW-1185">Reference proteome</keyword>